<organism>
    <name type="scientific">Pongo abelii</name>
    <name type="common">Sumatran orangutan</name>
    <name type="synonym">Pongo pygmaeus abelii</name>
    <dbReference type="NCBI Taxonomy" id="9601"/>
    <lineage>
        <taxon>Eukaryota</taxon>
        <taxon>Metazoa</taxon>
        <taxon>Chordata</taxon>
        <taxon>Craniata</taxon>
        <taxon>Vertebrata</taxon>
        <taxon>Euteleostomi</taxon>
        <taxon>Mammalia</taxon>
        <taxon>Eutheria</taxon>
        <taxon>Euarchontoglires</taxon>
        <taxon>Primates</taxon>
        <taxon>Haplorrhini</taxon>
        <taxon>Catarrhini</taxon>
        <taxon>Hominidae</taxon>
        <taxon>Pongo</taxon>
    </lineage>
</organism>
<name>P3IP1_PONAB</name>
<evidence type="ECO:0000250" key="1"/>
<evidence type="ECO:0000250" key="2">
    <source>
        <dbReference type="UniProtKB" id="Q7TMJ8"/>
    </source>
</evidence>
<evidence type="ECO:0000250" key="3">
    <source>
        <dbReference type="UniProtKB" id="Q96FE7"/>
    </source>
</evidence>
<evidence type="ECO:0000255" key="4"/>
<evidence type="ECO:0000255" key="5">
    <source>
        <dbReference type="PROSITE-ProRule" id="PRU00121"/>
    </source>
</evidence>
<evidence type="ECO:0000256" key="6">
    <source>
        <dbReference type="SAM" id="MobiDB-lite"/>
    </source>
</evidence>
<proteinExistence type="evidence at transcript level"/>
<keyword id="KW-1003">Cell membrane</keyword>
<keyword id="KW-1015">Disulfide bond</keyword>
<keyword id="KW-0325">Glycoprotein</keyword>
<keyword id="KW-0420">Kringle</keyword>
<keyword id="KW-0472">Membrane</keyword>
<keyword id="KW-1185">Reference proteome</keyword>
<keyword id="KW-0732">Signal</keyword>
<keyword id="KW-0812">Transmembrane</keyword>
<keyword id="KW-1133">Transmembrane helix</keyword>
<comment type="function">
    <text evidence="2">Negative regulator of hepatic phosphatidylinositol 3-kinase (PI3K) activity.</text>
</comment>
<comment type="subcellular location">
    <subcellularLocation>
        <location evidence="3">Cell membrane</location>
        <topology evidence="4">Single-pass type I membrane protein</topology>
    </subcellularLocation>
</comment>
<dbReference type="EMBL" id="CR858196">
    <property type="protein sequence ID" value="CAH90434.1"/>
    <property type="molecule type" value="mRNA"/>
</dbReference>
<dbReference type="RefSeq" id="NP_001125218.1">
    <property type="nucleotide sequence ID" value="NM_001131746.1"/>
</dbReference>
<dbReference type="FunCoup" id="Q5RCS3">
    <property type="interactions" value="275"/>
</dbReference>
<dbReference type="GlyCosmos" id="Q5RCS3">
    <property type="glycosylation" value="1 site, No reported glycans"/>
</dbReference>
<dbReference type="GeneID" id="100172110"/>
<dbReference type="KEGG" id="pon:100172110"/>
<dbReference type="CTD" id="113791"/>
<dbReference type="eggNOG" id="ENOG502QTWD">
    <property type="taxonomic scope" value="Eukaryota"/>
</dbReference>
<dbReference type="InParanoid" id="Q5RCS3"/>
<dbReference type="OrthoDB" id="9893972at2759"/>
<dbReference type="Proteomes" id="UP000001595">
    <property type="component" value="Unplaced"/>
</dbReference>
<dbReference type="GO" id="GO:0005886">
    <property type="term" value="C:plasma membrane"/>
    <property type="evidence" value="ECO:0007669"/>
    <property type="project" value="UniProtKB-SubCell"/>
</dbReference>
<dbReference type="GO" id="GO:0141039">
    <property type="term" value="F:phosphatidylinositol 3-kinase inhibitor activity"/>
    <property type="evidence" value="ECO:0000250"/>
    <property type="project" value="UniProtKB"/>
</dbReference>
<dbReference type="CDD" id="cd00108">
    <property type="entry name" value="KR"/>
    <property type="match status" value="1"/>
</dbReference>
<dbReference type="FunFam" id="2.40.20.10:FF:000012">
    <property type="entry name" value="Phosphoinositide-3-kinase-interacting protein 1"/>
    <property type="match status" value="1"/>
</dbReference>
<dbReference type="Gene3D" id="2.40.20.10">
    <property type="entry name" value="Plasminogen Kringle 4"/>
    <property type="match status" value="1"/>
</dbReference>
<dbReference type="InterPro" id="IPR000001">
    <property type="entry name" value="Kringle"/>
</dbReference>
<dbReference type="InterPro" id="IPR013806">
    <property type="entry name" value="Kringle-like"/>
</dbReference>
<dbReference type="InterPro" id="IPR018056">
    <property type="entry name" value="Kringle_CS"/>
</dbReference>
<dbReference type="InterPro" id="IPR038178">
    <property type="entry name" value="Kringle_sf"/>
</dbReference>
<dbReference type="Pfam" id="PF00051">
    <property type="entry name" value="Kringle"/>
    <property type="match status" value="1"/>
</dbReference>
<dbReference type="SMART" id="SM00130">
    <property type="entry name" value="KR"/>
    <property type="match status" value="1"/>
</dbReference>
<dbReference type="SUPFAM" id="SSF57440">
    <property type="entry name" value="Kringle-like"/>
    <property type="match status" value="1"/>
</dbReference>
<dbReference type="PROSITE" id="PS00021">
    <property type="entry name" value="KRINGLE_1"/>
    <property type="match status" value="1"/>
</dbReference>
<dbReference type="PROSITE" id="PS50070">
    <property type="entry name" value="KRINGLE_2"/>
    <property type="match status" value="1"/>
</dbReference>
<protein>
    <recommendedName>
        <fullName>Phosphoinositide-3-kinase-interacting protein 1</fullName>
    </recommendedName>
    <alternativeName>
        <fullName>Kringle domain-containing protein HGFL</fullName>
    </alternativeName>
</protein>
<reference key="1">
    <citation type="submission" date="2004-11" db="EMBL/GenBank/DDBJ databases">
        <authorList>
            <consortium name="The German cDNA consortium"/>
        </authorList>
    </citation>
    <scope>NUCLEOTIDE SEQUENCE [LARGE SCALE MRNA]</scope>
    <source>
        <tissue>Kidney</tissue>
    </source>
</reference>
<accession>Q5RCS3</accession>
<feature type="signal peptide" evidence="1">
    <location>
        <begin position="1"/>
        <end position="21"/>
    </location>
</feature>
<feature type="chain" id="PRO_0000280349" description="Phosphoinositide-3-kinase-interacting protein 1">
    <location>
        <begin position="22"/>
        <end position="263"/>
    </location>
</feature>
<feature type="topological domain" description="Extracellular" evidence="4">
    <location>
        <begin position="22"/>
        <end position="168"/>
    </location>
</feature>
<feature type="transmembrane region" description="Helical" evidence="4">
    <location>
        <begin position="169"/>
        <end position="189"/>
    </location>
</feature>
<feature type="topological domain" description="Cytoplasmic" evidence="4">
    <location>
        <begin position="190"/>
        <end position="263"/>
    </location>
</feature>
<feature type="domain" description="Kringle" evidence="5">
    <location>
        <begin position="24"/>
        <end position="101"/>
    </location>
</feature>
<feature type="region of interest" description="Disordered" evidence="6">
    <location>
        <begin position="242"/>
        <end position="263"/>
    </location>
</feature>
<feature type="compositionally biased region" description="Polar residues" evidence="6">
    <location>
        <begin position="242"/>
        <end position="251"/>
    </location>
</feature>
<feature type="glycosylation site" description="N-linked (GlcNAc...) asparagine" evidence="4">
    <location>
        <position position="98"/>
    </location>
</feature>
<feature type="disulfide bond" evidence="5">
    <location>
        <begin position="25"/>
        <end position="101"/>
    </location>
</feature>
<feature type="disulfide bond" evidence="5">
    <location>
        <begin position="46"/>
        <end position="82"/>
    </location>
</feature>
<feature type="disulfide bond" evidence="5">
    <location>
        <begin position="70"/>
        <end position="96"/>
    </location>
</feature>
<sequence length="263" mass="28091">MLLAWVQAFLVSNMLLAEAYGSGGCFWDNGHLYREDQTSPAPGLRCLNWLDAQSGLASAPVSGAGNHSYCRNPDEDPRGPWCYVSGEAGVPEKRPCENLSCPETTSQALPASTTEIEEASEGPGADEVQVFAPANALPARSEAAAVQPVIGISQRVRMNSKEKKDLGTLGYVLGITMMVIIVAIGAGIILGYSYKRGKDLKEQHDQKVCEREMQRITLPLSAFTNPTCEIVDEKTVVVHTSQTPVDPQEGSTPLMGQAGTPGA</sequence>
<gene>
    <name type="primary">PIK3IP1</name>
    <name type="synonym">HGFL</name>
</gene>